<accession>B9L0C1</accession>
<gene>
    <name evidence="1" type="primary">def</name>
    <name type="ordered locus">trd_1614</name>
</gene>
<proteinExistence type="inferred from homology"/>
<dbReference type="EC" id="3.5.1.88" evidence="1"/>
<dbReference type="EMBL" id="CP001275">
    <property type="protein sequence ID" value="ACM05222.1"/>
    <property type="molecule type" value="Genomic_DNA"/>
</dbReference>
<dbReference type="RefSeq" id="WP_015922559.1">
    <property type="nucleotide sequence ID" value="NC_011959.1"/>
</dbReference>
<dbReference type="SMR" id="B9L0C1"/>
<dbReference type="STRING" id="309801.trd_1614"/>
<dbReference type="KEGG" id="tro:trd_1614"/>
<dbReference type="eggNOG" id="COG0242">
    <property type="taxonomic scope" value="Bacteria"/>
</dbReference>
<dbReference type="HOGENOM" id="CLU_061901_2_1_0"/>
<dbReference type="OrthoDB" id="9784988at2"/>
<dbReference type="Proteomes" id="UP000000447">
    <property type="component" value="Chromosome"/>
</dbReference>
<dbReference type="GO" id="GO:0046872">
    <property type="term" value="F:metal ion binding"/>
    <property type="evidence" value="ECO:0007669"/>
    <property type="project" value="UniProtKB-KW"/>
</dbReference>
<dbReference type="GO" id="GO:0042586">
    <property type="term" value="F:peptide deformylase activity"/>
    <property type="evidence" value="ECO:0007669"/>
    <property type="project" value="UniProtKB-UniRule"/>
</dbReference>
<dbReference type="GO" id="GO:0043686">
    <property type="term" value="P:co-translational protein modification"/>
    <property type="evidence" value="ECO:0007669"/>
    <property type="project" value="TreeGrafter"/>
</dbReference>
<dbReference type="GO" id="GO:0006412">
    <property type="term" value="P:translation"/>
    <property type="evidence" value="ECO:0007669"/>
    <property type="project" value="UniProtKB-UniRule"/>
</dbReference>
<dbReference type="CDD" id="cd00487">
    <property type="entry name" value="Pep_deformylase"/>
    <property type="match status" value="1"/>
</dbReference>
<dbReference type="Gene3D" id="3.90.45.10">
    <property type="entry name" value="Peptide deformylase"/>
    <property type="match status" value="1"/>
</dbReference>
<dbReference type="HAMAP" id="MF_00163">
    <property type="entry name" value="Pep_deformylase"/>
    <property type="match status" value="1"/>
</dbReference>
<dbReference type="InterPro" id="IPR023635">
    <property type="entry name" value="Peptide_deformylase"/>
</dbReference>
<dbReference type="InterPro" id="IPR036821">
    <property type="entry name" value="Peptide_deformylase_sf"/>
</dbReference>
<dbReference type="NCBIfam" id="TIGR00079">
    <property type="entry name" value="pept_deformyl"/>
    <property type="match status" value="1"/>
</dbReference>
<dbReference type="NCBIfam" id="NF001159">
    <property type="entry name" value="PRK00150.1-3"/>
    <property type="match status" value="1"/>
</dbReference>
<dbReference type="PANTHER" id="PTHR10458">
    <property type="entry name" value="PEPTIDE DEFORMYLASE"/>
    <property type="match status" value="1"/>
</dbReference>
<dbReference type="PANTHER" id="PTHR10458:SF22">
    <property type="entry name" value="PEPTIDE DEFORMYLASE"/>
    <property type="match status" value="1"/>
</dbReference>
<dbReference type="Pfam" id="PF01327">
    <property type="entry name" value="Pep_deformylase"/>
    <property type="match status" value="1"/>
</dbReference>
<dbReference type="PIRSF" id="PIRSF004749">
    <property type="entry name" value="Pep_def"/>
    <property type="match status" value="1"/>
</dbReference>
<dbReference type="PRINTS" id="PR01576">
    <property type="entry name" value="PDEFORMYLASE"/>
</dbReference>
<dbReference type="SUPFAM" id="SSF56420">
    <property type="entry name" value="Peptide deformylase"/>
    <property type="match status" value="1"/>
</dbReference>
<evidence type="ECO:0000255" key="1">
    <source>
        <dbReference type="HAMAP-Rule" id="MF_00163"/>
    </source>
</evidence>
<organism>
    <name type="scientific">Thermomicrobium roseum (strain ATCC 27502 / DSM 5159 / P-2)</name>
    <dbReference type="NCBI Taxonomy" id="309801"/>
    <lineage>
        <taxon>Bacteria</taxon>
        <taxon>Pseudomonadati</taxon>
        <taxon>Thermomicrobiota</taxon>
        <taxon>Thermomicrobia</taxon>
        <taxon>Thermomicrobiales</taxon>
        <taxon>Thermomicrobiaceae</taxon>
        <taxon>Thermomicrobium</taxon>
    </lineage>
</organism>
<reference key="1">
    <citation type="journal article" date="2009" name="PLoS ONE">
        <title>Complete genome sequence of the aerobic CO-oxidizing thermophile Thermomicrobium roseum.</title>
        <authorList>
            <person name="Wu D."/>
            <person name="Raymond J."/>
            <person name="Wu M."/>
            <person name="Chatterji S."/>
            <person name="Ren Q."/>
            <person name="Graham J.E."/>
            <person name="Bryant D.A."/>
            <person name="Robb F."/>
            <person name="Colman A."/>
            <person name="Tallon L.J."/>
            <person name="Badger J.H."/>
            <person name="Madupu R."/>
            <person name="Ward N.L."/>
            <person name="Eisen J.A."/>
        </authorList>
    </citation>
    <scope>NUCLEOTIDE SEQUENCE [LARGE SCALE GENOMIC DNA]</scope>
    <source>
        <strain>ATCC 27502 / DSM 5159 / P-2</strain>
    </source>
</reference>
<keyword id="KW-0378">Hydrolase</keyword>
<keyword id="KW-0408">Iron</keyword>
<keyword id="KW-0479">Metal-binding</keyword>
<keyword id="KW-0648">Protein biosynthesis</keyword>
<keyword id="KW-1185">Reference proteome</keyword>
<feature type="chain" id="PRO_1000200753" description="Peptide deformylase">
    <location>
        <begin position="1"/>
        <end position="176"/>
    </location>
</feature>
<feature type="active site" evidence="1">
    <location>
        <position position="140"/>
    </location>
</feature>
<feature type="binding site" evidence="1">
    <location>
        <position position="97"/>
    </location>
    <ligand>
        <name>Fe cation</name>
        <dbReference type="ChEBI" id="CHEBI:24875"/>
    </ligand>
</feature>
<feature type="binding site" evidence="1">
    <location>
        <position position="139"/>
    </location>
    <ligand>
        <name>Fe cation</name>
        <dbReference type="ChEBI" id="CHEBI:24875"/>
    </ligand>
</feature>
<feature type="binding site" evidence="1">
    <location>
        <position position="143"/>
    </location>
    <ligand>
        <name>Fe cation</name>
        <dbReference type="ChEBI" id="CHEBI:24875"/>
    </ligand>
</feature>
<name>DEF_THERP</name>
<comment type="function">
    <text evidence="1">Removes the formyl group from the N-terminal Met of newly synthesized proteins. Requires at least a dipeptide for an efficient rate of reaction. N-terminal L-methionine is a prerequisite for activity but the enzyme has broad specificity at other positions.</text>
</comment>
<comment type="catalytic activity">
    <reaction evidence="1">
        <text>N-terminal N-formyl-L-methionyl-[peptide] + H2O = N-terminal L-methionyl-[peptide] + formate</text>
        <dbReference type="Rhea" id="RHEA:24420"/>
        <dbReference type="Rhea" id="RHEA-COMP:10639"/>
        <dbReference type="Rhea" id="RHEA-COMP:10640"/>
        <dbReference type="ChEBI" id="CHEBI:15377"/>
        <dbReference type="ChEBI" id="CHEBI:15740"/>
        <dbReference type="ChEBI" id="CHEBI:49298"/>
        <dbReference type="ChEBI" id="CHEBI:64731"/>
        <dbReference type="EC" id="3.5.1.88"/>
    </reaction>
</comment>
<comment type="cofactor">
    <cofactor evidence="1">
        <name>Fe(2+)</name>
        <dbReference type="ChEBI" id="CHEBI:29033"/>
    </cofactor>
    <text evidence="1">Binds 1 Fe(2+) ion.</text>
</comment>
<comment type="similarity">
    <text evidence="1">Belongs to the polypeptide deformylase family.</text>
</comment>
<protein>
    <recommendedName>
        <fullName evidence="1">Peptide deformylase</fullName>
        <shortName evidence="1">PDF</shortName>
        <ecNumber evidence="1">3.5.1.88</ecNumber>
    </recommendedName>
    <alternativeName>
        <fullName evidence="1">Polypeptide deformylase</fullName>
    </alternativeName>
</protein>
<sequence length="176" mass="19517">MAVRTIITEGDPRLRQKAIRIRVVDEEVRQLARDLWDTVRAARGLGLAAPQIGVLRRIIVVAIPPDYVEEGDPGVELTLINPEIVRASGRQVGLEGCLSIPGWYGEVPRSMHVTVKALDLDGREVRVKGSGLLARVLQHEIDHLEGILFVDRIEDRSTLRYIPDEEEETAEAATGT</sequence>